<evidence type="ECO:0000255" key="1">
    <source>
        <dbReference type="PROSITE-ProRule" id="PRU00349"/>
    </source>
</evidence>
<evidence type="ECO:0000269" key="2">
    <source>
    </source>
</evidence>
<gene>
    <name type="primary">glcR</name>
    <name type="synonym">ywpI</name>
    <name type="ordered locus">BSU36300</name>
</gene>
<dbReference type="EMBL" id="Z83337">
    <property type="protein sequence ID" value="CAB05951.1"/>
    <property type="molecule type" value="Genomic_DNA"/>
</dbReference>
<dbReference type="EMBL" id="AL009126">
    <property type="protein sequence ID" value="CAB15647.1"/>
    <property type="molecule type" value="Genomic_DNA"/>
</dbReference>
<dbReference type="PIR" id="C69632">
    <property type="entry name" value="C69632"/>
</dbReference>
<dbReference type="RefSeq" id="NP_391511.1">
    <property type="nucleotide sequence ID" value="NC_000964.3"/>
</dbReference>
<dbReference type="RefSeq" id="WP_003244075.1">
    <property type="nucleotide sequence ID" value="NZ_OZ025638.1"/>
</dbReference>
<dbReference type="SMR" id="P94591"/>
<dbReference type="FunCoup" id="P94591">
    <property type="interactions" value="19"/>
</dbReference>
<dbReference type="IntAct" id="P94591">
    <property type="interactions" value="1"/>
</dbReference>
<dbReference type="STRING" id="224308.BSU36300"/>
<dbReference type="PaxDb" id="224308-BSU36300"/>
<dbReference type="DNASU" id="936908"/>
<dbReference type="EnsemblBacteria" id="CAB15647">
    <property type="protein sequence ID" value="CAB15647"/>
    <property type="gene ID" value="BSU_36300"/>
</dbReference>
<dbReference type="GeneID" id="936908"/>
<dbReference type="KEGG" id="bsu:BSU36300"/>
<dbReference type="PATRIC" id="fig|224308.179.peg.3929"/>
<dbReference type="eggNOG" id="COG1349">
    <property type="taxonomic scope" value="Bacteria"/>
</dbReference>
<dbReference type="InParanoid" id="P94591"/>
<dbReference type="OrthoDB" id="9798651at2"/>
<dbReference type="PhylomeDB" id="P94591"/>
<dbReference type="BioCyc" id="BSUB:BSU36300-MONOMER"/>
<dbReference type="Proteomes" id="UP000001570">
    <property type="component" value="Chromosome"/>
</dbReference>
<dbReference type="GO" id="GO:0000987">
    <property type="term" value="F:cis-regulatory region sequence-specific DNA binding"/>
    <property type="evidence" value="ECO:0000318"/>
    <property type="project" value="GO_Central"/>
</dbReference>
<dbReference type="GO" id="GO:0098531">
    <property type="term" value="F:ligand-modulated transcription factor activity"/>
    <property type="evidence" value="ECO:0000318"/>
    <property type="project" value="GO_Central"/>
</dbReference>
<dbReference type="GO" id="GO:0006355">
    <property type="term" value="P:regulation of DNA-templated transcription"/>
    <property type="evidence" value="ECO:0000318"/>
    <property type="project" value="GO_Central"/>
</dbReference>
<dbReference type="Gene3D" id="3.40.50.1360">
    <property type="match status" value="1"/>
</dbReference>
<dbReference type="Gene3D" id="1.10.10.10">
    <property type="entry name" value="Winged helix-like DNA-binding domain superfamily/Winged helix DNA-binding domain"/>
    <property type="match status" value="1"/>
</dbReference>
<dbReference type="InterPro" id="IPR050313">
    <property type="entry name" value="Carb_Metab_HTH_regulators"/>
</dbReference>
<dbReference type="InterPro" id="IPR014036">
    <property type="entry name" value="DeoR-like_C"/>
</dbReference>
<dbReference type="InterPro" id="IPR001034">
    <property type="entry name" value="DeoR_HTH"/>
</dbReference>
<dbReference type="InterPro" id="IPR037171">
    <property type="entry name" value="NagB/RpiA_transferase-like"/>
</dbReference>
<dbReference type="InterPro" id="IPR018356">
    <property type="entry name" value="Tscrpt_reg_HTH_DeoR_CS"/>
</dbReference>
<dbReference type="InterPro" id="IPR036388">
    <property type="entry name" value="WH-like_DNA-bd_sf"/>
</dbReference>
<dbReference type="InterPro" id="IPR036390">
    <property type="entry name" value="WH_DNA-bd_sf"/>
</dbReference>
<dbReference type="PANTHER" id="PTHR30363">
    <property type="entry name" value="HTH-TYPE TRANSCRIPTIONAL REGULATOR SRLR-RELATED"/>
    <property type="match status" value="1"/>
</dbReference>
<dbReference type="PANTHER" id="PTHR30363:SF51">
    <property type="entry name" value="HTH-TYPE TRANSCRIPTIONAL REPRESSOR GLCR"/>
    <property type="match status" value="1"/>
</dbReference>
<dbReference type="Pfam" id="PF00455">
    <property type="entry name" value="DeoRC"/>
    <property type="match status" value="1"/>
</dbReference>
<dbReference type="Pfam" id="PF08220">
    <property type="entry name" value="HTH_DeoR"/>
    <property type="match status" value="1"/>
</dbReference>
<dbReference type="PRINTS" id="PR00037">
    <property type="entry name" value="HTHLACR"/>
</dbReference>
<dbReference type="SMART" id="SM01134">
    <property type="entry name" value="DeoRC"/>
    <property type="match status" value="1"/>
</dbReference>
<dbReference type="SMART" id="SM00420">
    <property type="entry name" value="HTH_DEOR"/>
    <property type="match status" value="1"/>
</dbReference>
<dbReference type="SUPFAM" id="SSF100950">
    <property type="entry name" value="NagB/RpiA/CoA transferase-like"/>
    <property type="match status" value="1"/>
</dbReference>
<dbReference type="SUPFAM" id="SSF46785">
    <property type="entry name" value="Winged helix' DNA-binding domain"/>
    <property type="match status" value="1"/>
</dbReference>
<dbReference type="PROSITE" id="PS00894">
    <property type="entry name" value="HTH_DEOR_1"/>
    <property type="match status" value="1"/>
</dbReference>
<dbReference type="PROSITE" id="PS51000">
    <property type="entry name" value="HTH_DEOR_2"/>
    <property type="match status" value="1"/>
</dbReference>
<reference key="1">
    <citation type="journal article" date="1997" name="Microbiology">
        <title>The Bacillus subtilis genome from gerBC (311 degrees) to licR (334 degrees).</title>
        <authorList>
            <person name="Presecan E."/>
            <person name="Moszer I."/>
            <person name="Boursier L."/>
            <person name="Cruz Ramos H."/>
            <person name="De La Fuente V."/>
            <person name="Hullo M.-F."/>
            <person name="Lelong C."/>
            <person name="Schleich S."/>
            <person name="Sekowska A."/>
            <person name="Song B.H."/>
            <person name="Villani G."/>
            <person name="Kunst F."/>
            <person name="Danchin A."/>
            <person name="Glaser P."/>
        </authorList>
    </citation>
    <scope>NUCLEOTIDE SEQUENCE [GENOMIC DNA]</scope>
    <source>
        <strain>168</strain>
    </source>
</reference>
<reference key="2">
    <citation type="journal article" date="1997" name="Nature">
        <title>The complete genome sequence of the Gram-positive bacterium Bacillus subtilis.</title>
        <authorList>
            <person name="Kunst F."/>
            <person name="Ogasawara N."/>
            <person name="Moszer I."/>
            <person name="Albertini A.M."/>
            <person name="Alloni G."/>
            <person name="Azevedo V."/>
            <person name="Bertero M.G."/>
            <person name="Bessieres P."/>
            <person name="Bolotin A."/>
            <person name="Borchert S."/>
            <person name="Borriss R."/>
            <person name="Boursier L."/>
            <person name="Brans A."/>
            <person name="Braun M."/>
            <person name="Brignell S.C."/>
            <person name="Bron S."/>
            <person name="Brouillet S."/>
            <person name="Bruschi C.V."/>
            <person name="Caldwell B."/>
            <person name="Capuano V."/>
            <person name="Carter N.M."/>
            <person name="Choi S.-K."/>
            <person name="Codani J.-J."/>
            <person name="Connerton I.F."/>
            <person name="Cummings N.J."/>
            <person name="Daniel R.A."/>
            <person name="Denizot F."/>
            <person name="Devine K.M."/>
            <person name="Duesterhoeft A."/>
            <person name="Ehrlich S.D."/>
            <person name="Emmerson P.T."/>
            <person name="Entian K.-D."/>
            <person name="Errington J."/>
            <person name="Fabret C."/>
            <person name="Ferrari E."/>
            <person name="Foulger D."/>
            <person name="Fritz C."/>
            <person name="Fujita M."/>
            <person name="Fujita Y."/>
            <person name="Fuma S."/>
            <person name="Galizzi A."/>
            <person name="Galleron N."/>
            <person name="Ghim S.-Y."/>
            <person name="Glaser P."/>
            <person name="Goffeau A."/>
            <person name="Golightly E.J."/>
            <person name="Grandi G."/>
            <person name="Guiseppi G."/>
            <person name="Guy B.J."/>
            <person name="Haga K."/>
            <person name="Haiech J."/>
            <person name="Harwood C.R."/>
            <person name="Henaut A."/>
            <person name="Hilbert H."/>
            <person name="Holsappel S."/>
            <person name="Hosono S."/>
            <person name="Hullo M.-F."/>
            <person name="Itaya M."/>
            <person name="Jones L.-M."/>
            <person name="Joris B."/>
            <person name="Karamata D."/>
            <person name="Kasahara Y."/>
            <person name="Klaerr-Blanchard M."/>
            <person name="Klein C."/>
            <person name="Kobayashi Y."/>
            <person name="Koetter P."/>
            <person name="Koningstein G."/>
            <person name="Krogh S."/>
            <person name="Kumano M."/>
            <person name="Kurita K."/>
            <person name="Lapidus A."/>
            <person name="Lardinois S."/>
            <person name="Lauber J."/>
            <person name="Lazarevic V."/>
            <person name="Lee S.-M."/>
            <person name="Levine A."/>
            <person name="Liu H."/>
            <person name="Masuda S."/>
            <person name="Mauel C."/>
            <person name="Medigue C."/>
            <person name="Medina N."/>
            <person name="Mellado R.P."/>
            <person name="Mizuno M."/>
            <person name="Moestl D."/>
            <person name="Nakai S."/>
            <person name="Noback M."/>
            <person name="Noone D."/>
            <person name="O'Reilly M."/>
            <person name="Ogawa K."/>
            <person name="Ogiwara A."/>
            <person name="Oudega B."/>
            <person name="Park S.-H."/>
            <person name="Parro V."/>
            <person name="Pohl T.M."/>
            <person name="Portetelle D."/>
            <person name="Porwollik S."/>
            <person name="Prescott A.M."/>
            <person name="Presecan E."/>
            <person name="Pujic P."/>
            <person name="Purnelle B."/>
            <person name="Rapoport G."/>
            <person name="Rey M."/>
            <person name="Reynolds S."/>
            <person name="Rieger M."/>
            <person name="Rivolta C."/>
            <person name="Rocha E."/>
            <person name="Roche B."/>
            <person name="Rose M."/>
            <person name="Sadaie Y."/>
            <person name="Sato T."/>
            <person name="Scanlan E."/>
            <person name="Schleich S."/>
            <person name="Schroeter R."/>
            <person name="Scoffone F."/>
            <person name="Sekiguchi J."/>
            <person name="Sekowska A."/>
            <person name="Seror S.J."/>
            <person name="Serror P."/>
            <person name="Shin B.-S."/>
            <person name="Soldo B."/>
            <person name="Sorokin A."/>
            <person name="Tacconi E."/>
            <person name="Takagi T."/>
            <person name="Takahashi H."/>
            <person name="Takemaru K."/>
            <person name="Takeuchi M."/>
            <person name="Tamakoshi A."/>
            <person name="Tanaka T."/>
            <person name="Terpstra P."/>
            <person name="Tognoni A."/>
            <person name="Tosato V."/>
            <person name="Uchiyama S."/>
            <person name="Vandenbol M."/>
            <person name="Vannier F."/>
            <person name="Vassarotti A."/>
            <person name="Viari A."/>
            <person name="Wambutt R."/>
            <person name="Wedler E."/>
            <person name="Wedler H."/>
            <person name="Weitzenegger T."/>
            <person name="Winters P."/>
            <person name="Wipat A."/>
            <person name="Yamamoto H."/>
            <person name="Yamane K."/>
            <person name="Yasumoto K."/>
            <person name="Yata K."/>
            <person name="Yoshida K."/>
            <person name="Yoshikawa H.-F."/>
            <person name="Zumstein E."/>
            <person name="Yoshikawa H."/>
            <person name="Danchin A."/>
        </authorList>
    </citation>
    <scope>NUCLEOTIDE SEQUENCE [LARGE SCALE GENOMIC DNA]</scope>
    <source>
        <strain>168</strain>
    </source>
</reference>
<reference key="3">
    <citation type="journal article" date="2001" name="Arch. Microbiol.">
        <title>Characterization of glucose-repression-resistant mutants of Bacillus subtilis: identification of the glcR gene.</title>
        <authorList>
            <person name="Stuelke J."/>
            <person name="Martin-Verstraete I."/>
            <person name="Glaser P."/>
            <person name="Rapoport G."/>
        </authorList>
    </citation>
    <scope>FUNCTION</scope>
    <scope>MUTAGENESIS OF THR-35 AND GLY-55</scope>
</reference>
<accession>P94591</accession>
<accession>Q795B1</accession>
<organism>
    <name type="scientific">Bacillus subtilis (strain 168)</name>
    <dbReference type="NCBI Taxonomy" id="224308"/>
    <lineage>
        <taxon>Bacteria</taxon>
        <taxon>Bacillati</taxon>
        <taxon>Bacillota</taxon>
        <taxon>Bacilli</taxon>
        <taxon>Bacillales</taxon>
        <taxon>Bacillaceae</taxon>
        <taxon>Bacillus</taxon>
    </lineage>
</organism>
<sequence>MYQEERLVAILDFLKQHNRITTEQICTLLQVSRDTARRDLVKLEEQNAIIRTRGGAILPTVHQKIQSYSGRLKTVSEEKNKIGRLAASLIHDGDRVILDASTTVQACAKHLNAVDCTVITNSINLADVLSDKEGIEIYLLGGKLEKEHRFLYGSSVIEKLSSYHVDKALIGVVGISEHGITIAHEEDGMVKRKMIQQAKQVIALADHSKLGSTSFYQYAELNEIDLLITDRLPNQAFCDLLDRNGVELLVTEQDEGKD</sequence>
<comment type="function">
    <text evidence="2">Plays a role in carbon catabolite repression (CCR). Specifically required for transcriptional repression of the levanase operon by glucose but not by other sugars.</text>
</comment>
<protein>
    <recommendedName>
        <fullName>HTH-type transcriptional repressor GlcR</fullName>
    </recommendedName>
</protein>
<proteinExistence type="evidence at protein level"/>
<keyword id="KW-0238">DNA-binding</keyword>
<keyword id="KW-1185">Reference proteome</keyword>
<keyword id="KW-0678">Repressor</keyword>
<keyword id="KW-0804">Transcription</keyword>
<keyword id="KW-0805">Transcription regulation</keyword>
<name>GLCR_BACSU</name>
<feature type="chain" id="PRO_0000360617" description="HTH-type transcriptional repressor GlcR">
    <location>
        <begin position="1"/>
        <end position="258"/>
    </location>
</feature>
<feature type="domain" description="HTH deoR-type" evidence="1">
    <location>
        <begin position="3"/>
        <end position="58"/>
    </location>
</feature>
<feature type="DNA-binding region" description="H-T-H motif" evidence="1">
    <location>
        <begin position="20"/>
        <end position="39"/>
    </location>
</feature>
<feature type="mutagenesis site" description="In grl-30; loss of glucose repression, deficiency in glucose transport and absence of ptsG expression." evidence="2">
    <original>T</original>
    <variation>I</variation>
    <location>
        <position position="35"/>
    </location>
</feature>
<feature type="mutagenesis site" description="In grl-15; loss of glucose repression, deficiency in glucose transport and absence of ptsG expression." evidence="2">
    <original>G</original>
    <variation>V</variation>
    <location>
        <position position="55"/>
    </location>
</feature>